<sequence length="247" mass="26857">MSDSPLIAFPRGCITGTFIRRVKRFSVEMETAGAGAPERVWIHSNNSGSMLGLLRAGAPVLASPAANPARKLKWTQELAGLDGMWVGVNTQTPNRLLEAAFHAGRLPWAAGYTMFRREARCGASRLDARMDAPQDSGLPPLWVECKNVTMVEDDVAAFPDAATERGQKHLREMMEIVRQGQRAAMFYLVQRADGHCFGPADYVDPVYAGLFYEAAAAGVEMYPHRALVSEHGIDLGPLLPVVPPPGV</sequence>
<name>SFSA_OLEA2</name>
<protein>
    <recommendedName>
        <fullName evidence="1">Sugar fermentation stimulation protein homolog</fullName>
    </recommendedName>
</protein>
<keyword id="KW-1185">Reference proteome</keyword>
<organism>
    <name type="scientific">Oleidesulfovibrio alaskensis (strain ATCC BAA-1058 / DSM 17464 / G20)</name>
    <name type="common">Desulfovibrio alaskensis</name>
    <dbReference type="NCBI Taxonomy" id="207559"/>
    <lineage>
        <taxon>Bacteria</taxon>
        <taxon>Pseudomonadati</taxon>
        <taxon>Thermodesulfobacteriota</taxon>
        <taxon>Desulfovibrionia</taxon>
        <taxon>Desulfovibrionales</taxon>
        <taxon>Desulfovibrionaceae</taxon>
        <taxon>Oleidesulfovibrio</taxon>
    </lineage>
</organism>
<proteinExistence type="inferred from homology"/>
<dbReference type="EMBL" id="CP000112">
    <property type="protein sequence ID" value="ABB40387.1"/>
    <property type="molecule type" value="Genomic_DNA"/>
</dbReference>
<dbReference type="RefSeq" id="WP_011369268.1">
    <property type="nucleotide sequence ID" value="NC_007519.1"/>
</dbReference>
<dbReference type="SMR" id="Q30VA9"/>
<dbReference type="STRING" id="207559.Dde_3594"/>
<dbReference type="DNASU" id="3758580"/>
<dbReference type="KEGG" id="dde:Dde_3594"/>
<dbReference type="eggNOG" id="COG1489">
    <property type="taxonomic scope" value="Bacteria"/>
</dbReference>
<dbReference type="HOGENOM" id="CLU_052299_2_0_7"/>
<dbReference type="Proteomes" id="UP000002710">
    <property type="component" value="Chromosome"/>
</dbReference>
<dbReference type="GO" id="GO:0003677">
    <property type="term" value="F:DNA binding"/>
    <property type="evidence" value="ECO:0007669"/>
    <property type="project" value="InterPro"/>
</dbReference>
<dbReference type="CDD" id="cd22359">
    <property type="entry name" value="SfsA-like_bacterial"/>
    <property type="match status" value="1"/>
</dbReference>
<dbReference type="Gene3D" id="2.40.50.580">
    <property type="match status" value="1"/>
</dbReference>
<dbReference type="Gene3D" id="3.40.1350.60">
    <property type="match status" value="1"/>
</dbReference>
<dbReference type="HAMAP" id="MF_00095">
    <property type="entry name" value="SfsA"/>
    <property type="match status" value="1"/>
</dbReference>
<dbReference type="InterPro" id="IPR005224">
    <property type="entry name" value="SfsA"/>
</dbReference>
<dbReference type="InterPro" id="IPR040452">
    <property type="entry name" value="SfsA_C"/>
</dbReference>
<dbReference type="InterPro" id="IPR041465">
    <property type="entry name" value="SfsA_N"/>
</dbReference>
<dbReference type="NCBIfam" id="TIGR00230">
    <property type="entry name" value="sfsA"/>
    <property type="match status" value="1"/>
</dbReference>
<dbReference type="PANTHER" id="PTHR30545">
    <property type="entry name" value="SUGAR FERMENTATION STIMULATION PROTEIN A"/>
    <property type="match status" value="1"/>
</dbReference>
<dbReference type="PANTHER" id="PTHR30545:SF2">
    <property type="entry name" value="SUGAR FERMENTATION STIMULATION PROTEIN A"/>
    <property type="match status" value="1"/>
</dbReference>
<dbReference type="Pfam" id="PF03749">
    <property type="entry name" value="SfsA"/>
    <property type="match status" value="1"/>
</dbReference>
<dbReference type="Pfam" id="PF17746">
    <property type="entry name" value="SfsA_N"/>
    <property type="match status" value="1"/>
</dbReference>
<accession>Q30VA9</accession>
<reference key="1">
    <citation type="journal article" date="2011" name="J. Bacteriol.">
        <title>Complete genome sequence and updated annotation of Desulfovibrio alaskensis G20.</title>
        <authorList>
            <person name="Hauser L.J."/>
            <person name="Land M.L."/>
            <person name="Brown S.D."/>
            <person name="Larimer F."/>
            <person name="Keller K.L."/>
            <person name="Rapp-Giles B.J."/>
            <person name="Price M.N."/>
            <person name="Lin M."/>
            <person name="Bruce D.C."/>
            <person name="Detter J.C."/>
            <person name="Tapia R."/>
            <person name="Han C.S."/>
            <person name="Goodwin L.A."/>
            <person name="Cheng J.F."/>
            <person name="Pitluck S."/>
            <person name="Copeland A."/>
            <person name="Lucas S."/>
            <person name="Nolan M."/>
            <person name="Lapidus A.L."/>
            <person name="Palumbo A.V."/>
            <person name="Wall J.D."/>
        </authorList>
    </citation>
    <scope>NUCLEOTIDE SEQUENCE [LARGE SCALE GENOMIC DNA]</scope>
    <source>
        <strain>ATCC BAA-1058 / DSM 17464 / G20</strain>
    </source>
</reference>
<feature type="chain" id="PRO_0000340139" description="Sugar fermentation stimulation protein homolog">
    <location>
        <begin position="1"/>
        <end position="247"/>
    </location>
</feature>
<evidence type="ECO:0000255" key="1">
    <source>
        <dbReference type="HAMAP-Rule" id="MF_00095"/>
    </source>
</evidence>
<comment type="similarity">
    <text evidence="1">Belongs to the SfsA family.</text>
</comment>
<gene>
    <name evidence="1" type="primary">sfsA</name>
    <name type="ordered locus">Dde_3594</name>
</gene>